<keyword id="KW-0010">Activator</keyword>
<keyword id="KW-0238">DNA-binding</keyword>
<keyword id="KW-0479">Metal-binding</keyword>
<keyword id="KW-0539">Nucleus</keyword>
<keyword id="KW-1267">Proteomics identification</keyword>
<keyword id="KW-1185">Reference proteome</keyword>
<keyword id="KW-0677">Repeat</keyword>
<keyword id="KW-0678">Repressor</keyword>
<keyword id="KW-0804">Transcription</keyword>
<keyword id="KW-0805">Transcription regulation</keyword>
<keyword id="KW-0862">Zinc</keyword>
<keyword id="KW-0863">Zinc-finger</keyword>
<proteinExistence type="evidence at protein level"/>
<comment type="function">
    <text evidence="4">Functions as a multifunctional transcription factor that may exhibit positive and negative control on a large number of genes. May antagonize YY1 and function in development and differentiation.</text>
</comment>
<comment type="subcellular location">
    <subcellularLocation>
        <location evidence="6">Nucleus</location>
    </subcellularLocation>
</comment>
<comment type="tissue specificity">
    <text evidence="3">Expressed in kidney, liver, spleen and testis but not in colon.</text>
</comment>
<comment type="miscellaneous">
    <text>The gene encoding this protein appears to have arisen by retrotransposition of the YY1 gene in placental mammals. It is encoded by a single exon found in an intron of the gene MBTPS2.</text>
</comment>
<comment type="similarity">
    <text evidence="6">Belongs to the YY transcription factor family.</text>
</comment>
<reference key="1">
    <citation type="journal article" date="2004" name="J. Biol. Chem.">
        <title>Molecular cloning and functional characterization of the transcription factor YY2.</title>
        <authorList>
            <person name="Nguyen N."/>
            <person name="Zhang X."/>
            <person name="Olashaw N."/>
            <person name="Seto E."/>
        </authorList>
    </citation>
    <scope>NUCLEOTIDE SEQUENCE [MRNA]</scope>
    <scope>TISSUE SPECIFICITY</scope>
    <source>
        <tissue>Cervix carcinoma</tissue>
    </source>
</reference>
<reference key="2">
    <citation type="journal article" date="2004" name="Nat. Genet.">
        <title>Complete sequencing and characterization of 21,243 full-length human cDNAs.</title>
        <authorList>
            <person name="Ota T."/>
            <person name="Suzuki Y."/>
            <person name="Nishikawa T."/>
            <person name="Otsuki T."/>
            <person name="Sugiyama T."/>
            <person name="Irie R."/>
            <person name="Wakamatsu A."/>
            <person name="Hayashi K."/>
            <person name="Sato H."/>
            <person name="Nagai K."/>
            <person name="Kimura K."/>
            <person name="Makita H."/>
            <person name="Sekine M."/>
            <person name="Obayashi M."/>
            <person name="Nishi T."/>
            <person name="Shibahara T."/>
            <person name="Tanaka T."/>
            <person name="Ishii S."/>
            <person name="Yamamoto J."/>
            <person name="Saito K."/>
            <person name="Kawai Y."/>
            <person name="Isono Y."/>
            <person name="Nakamura Y."/>
            <person name="Nagahari K."/>
            <person name="Murakami K."/>
            <person name="Yasuda T."/>
            <person name="Iwayanagi T."/>
            <person name="Wagatsuma M."/>
            <person name="Shiratori A."/>
            <person name="Sudo H."/>
            <person name="Hosoiri T."/>
            <person name="Kaku Y."/>
            <person name="Kodaira H."/>
            <person name="Kondo H."/>
            <person name="Sugawara M."/>
            <person name="Takahashi M."/>
            <person name="Kanda K."/>
            <person name="Yokoi T."/>
            <person name="Furuya T."/>
            <person name="Kikkawa E."/>
            <person name="Omura Y."/>
            <person name="Abe K."/>
            <person name="Kamihara K."/>
            <person name="Katsuta N."/>
            <person name="Sato K."/>
            <person name="Tanikawa M."/>
            <person name="Yamazaki M."/>
            <person name="Ninomiya K."/>
            <person name="Ishibashi T."/>
            <person name="Yamashita H."/>
            <person name="Murakawa K."/>
            <person name="Fujimori K."/>
            <person name="Tanai H."/>
            <person name="Kimata M."/>
            <person name="Watanabe M."/>
            <person name="Hiraoka S."/>
            <person name="Chiba Y."/>
            <person name="Ishida S."/>
            <person name="Ono Y."/>
            <person name="Takiguchi S."/>
            <person name="Watanabe S."/>
            <person name="Yosida M."/>
            <person name="Hotuta T."/>
            <person name="Kusano J."/>
            <person name="Kanehori K."/>
            <person name="Takahashi-Fujii A."/>
            <person name="Hara H."/>
            <person name="Tanase T.-O."/>
            <person name="Nomura Y."/>
            <person name="Togiya S."/>
            <person name="Komai F."/>
            <person name="Hara R."/>
            <person name="Takeuchi K."/>
            <person name="Arita M."/>
            <person name="Imose N."/>
            <person name="Musashino K."/>
            <person name="Yuuki H."/>
            <person name="Oshima A."/>
            <person name="Sasaki N."/>
            <person name="Aotsuka S."/>
            <person name="Yoshikawa Y."/>
            <person name="Matsunawa H."/>
            <person name="Ichihara T."/>
            <person name="Shiohata N."/>
            <person name="Sano S."/>
            <person name="Moriya S."/>
            <person name="Momiyama H."/>
            <person name="Satoh N."/>
            <person name="Takami S."/>
            <person name="Terashima Y."/>
            <person name="Suzuki O."/>
            <person name="Nakagawa S."/>
            <person name="Senoh A."/>
            <person name="Mizoguchi H."/>
            <person name="Goto Y."/>
            <person name="Shimizu F."/>
            <person name="Wakebe H."/>
            <person name="Hishigaki H."/>
            <person name="Watanabe T."/>
            <person name="Sugiyama A."/>
            <person name="Takemoto M."/>
            <person name="Kawakami B."/>
            <person name="Yamazaki M."/>
            <person name="Watanabe K."/>
            <person name="Kumagai A."/>
            <person name="Itakura S."/>
            <person name="Fukuzumi Y."/>
            <person name="Fujimori Y."/>
            <person name="Komiyama M."/>
            <person name="Tashiro H."/>
            <person name="Tanigami A."/>
            <person name="Fujiwara T."/>
            <person name="Ono T."/>
            <person name="Yamada K."/>
            <person name="Fujii Y."/>
            <person name="Ozaki K."/>
            <person name="Hirao M."/>
            <person name="Ohmori Y."/>
            <person name="Kawabata A."/>
            <person name="Hikiji T."/>
            <person name="Kobatake N."/>
            <person name="Inagaki H."/>
            <person name="Ikema Y."/>
            <person name="Okamoto S."/>
            <person name="Okitani R."/>
            <person name="Kawakami T."/>
            <person name="Noguchi S."/>
            <person name="Itoh T."/>
            <person name="Shigeta K."/>
            <person name="Senba T."/>
            <person name="Matsumura K."/>
            <person name="Nakajima Y."/>
            <person name="Mizuno T."/>
            <person name="Morinaga M."/>
            <person name="Sasaki M."/>
            <person name="Togashi T."/>
            <person name="Oyama M."/>
            <person name="Hata H."/>
            <person name="Watanabe M."/>
            <person name="Komatsu T."/>
            <person name="Mizushima-Sugano J."/>
            <person name="Satoh T."/>
            <person name="Shirai Y."/>
            <person name="Takahashi Y."/>
            <person name="Nakagawa K."/>
            <person name="Okumura K."/>
            <person name="Nagase T."/>
            <person name="Nomura N."/>
            <person name="Kikuchi H."/>
            <person name="Masuho Y."/>
            <person name="Yamashita R."/>
            <person name="Nakai K."/>
            <person name="Yada T."/>
            <person name="Nakamura Y."/>
            <person name="Ohara O."/>
            <person name="Isogai T."/>
            <person name="Sugano S."/>
        </authorList>
    </citation>
    <scope>NUCLEOTIDE SEQUENCE [LARGE SCALE MRNA]</scope>
    <source>
        <tissue>Lung</tissue>
    </source>
</reference>
<reference key="3">
    <citation type="journal article" date="2005" name="Nature">
        <title>The DNA sequence of the human X chromosome.</title>
        <authorList>
            <person name="Ross M.T."/>
            <person name="Grafham D.V."/>
            <person name="Coffey A.J."/>
            <person name="Scherer S."/>
            <person name="McLay K."/>
            <person name="Muzny D."/>
            <person name="Platzer M."/>
            <person name="Howell G.R."/>
            <person name="Burrows C."/>
            <person name="Bird C.P."/>
            <person name="Frankish A."/>
            <person name="Lovell F.L."/>
            <person name="Howe K.L."/>
            <person name="Ashurst J.L."/>
            <person name="Fulton R.S."/>
            <person name="Sudbrak R."/>
            <person name="Wen G."/>
            <person name="Jones M.C."/>
            <person name="Hurles M.E."/>
            <person name="Andrews T.D."/>
            <person name="Scott C.E."/>
            <person name="Searle S."/>
            <person name="Ramser J."/>
            <person name="Whittaker A."/>
            <person name="Deadman R."/>
            <person name="Carter N.P."/>
            <person name="Hunt S.E."/>
            <person name="Chen R."/>
            <person name="Cree A."/>
            <person name="Gunaratne P."/>
            <person name="Havlak P."/>
            <person name="Hodgson A."/>
            <person name="Metzker M.L."/>
            <person name="Richards S."/>
            <person name="Scott G."/>
            <person name="Steffen D."/>
            <person name="Sodergren E."/>
            <person name="Wheeler D.A."/>
            <person name="Worley K.C."/>
            <person name="Ainscough R."/>
            <person name="Ambrose K.D."/>
            <person name="Ansari-Lari M.A."/>
            <person name="Aradhya S."/>
            <person name="Ashwell R.I."/>
            <person name="Babbage A.K."/>
            <person name="Bagguley C.L."/>
            <person name="Ballabio A."/>
            <person name="Banerjee R."/>
            <person name="Barker G.E."/>
            <person name="Barlow K.F."/>
            <person name="Barrett I.P."/>
            <person name="Bates K.N."/>
            <person name="Beare D.M."/>
            <person name="Beasley H."/>
            <person name="Beasley O."/>
            <person name="Beck A."/>
            <person name="Bethel G."/>
            <person name="Blechschmidt K."/>
            <person name="Brady N."/>
            <person name="Bray-Allen S."/>
            <person name="Bridgeman A.M."/>
            <person name="Brown A.J."/>
            <person name="Brown M.J."/>
            <person name="Bonnin D."/>
            <person name="Bruford E.A."/>
            <person name="Buhay C."/>
            <person name="Burch P."/>
            <person name="Burford D."/>
            <person name="Burgess J."/>
            <person name="Burrill W."/>
            <person name="Burton J."/>
            <person name="Bye J.M."/>
            <person name="Carder C."/>
            <person name="Carrel L."/>
            <person name="Chako J."/>
            <person name="Chapman J.C."/>
            <person name="Chavez D."/>
            <person name="Chen E."/>
            <person name="Chen G."/>
            <person name="Chen Y."/>
            <person name="Chen Z."/>
            <person name="Chinault C."/>
            <person name="Ciccodicola A."/>
            <person name="Clark S.Y."/>
            <person name="Clarke G."/>
            <person name="Clee C.M."/>
            <person name="Clegg S."/>
            <person name="Clerc-Blankenburg K."/>
            <person name="Clifford K."/>
            <person name="Cobley V."/>
            <person name="Cole C.G."/>
            <person name="Conquer J.S."/>
            <person name="Corby N."/>
            <person name="Connor R.E."/>
            <person name="David R."/>
            <person name="Davies J."/>
            <person name="Davis C."/>
            <person name="Davis J."/>
            <person name="Delgado O."/>
            <person name="Deshazo D."/>
            <person name="Dhami P."/>
            <person name="Ding Y."/>
            <person name="Dinh H."/>
            <person name="Dodsworth S."/>
            <person name="Draper H."/>
            <person name="Dugan-Rocha S."/>
            <person name="Dunham A."/>
            <person name="Dunn M."/>
            <person name="Durbin K.J."/>
            <person name="Dutta I."/>
            <person name="Eades T."/>
            <person name="Ellwood M."/>
            <person name="Emery-Cohen A."/>
            <person name="Errington H."/>
            <person name="Evans K.L."/>
            <person name="Faulkner L."/>
            <person name="Francis F."/>
            <person name="Frankland J."/>
            <person name="Fraser A.E."/>
            <person name="Galgoczy P."/>
            <person name="Gilbert J."/>
            <person name="Gill R."/>
            <person name="Gloeckner G."/>
            <person name="Gregory S.G."/>
            <person name="Gribble S."/>
            <person name="Griffiths C."/>
            <person name="Grocock R."/>
            <person name="Gu Y."/>
            <person name="Gwilliam R."/>
            <person name="Hamilton C."/>
            <person name="Hart E.A."/>
            <person name="Hawes A."/>
            <person name="Heath P.D."/>
            <person name="Heitmann K."/>
            <person name="Hennig S."/>
            <person name="Hernandez J."/>
            <person name="Hinzmann B."/>
            <person name="Ho S."/>
            <person name="Hoffs M."/>
            <person name="Howden P.J."/>
            <person name="Huckle E.J."/>
            <person name="Hume J."/>
            <person name="Hunt P.J."/>
            <person name="Hunt A.R."/>
            <person name="Isherwood J."/>
            <person name="Jacob L."/>
            <person name="Johnson D."/>
            <person name="Jones S."/>
            <person name="de Jong P.J."/>
            <person name="Joseph S.S."/>
            <person name="Keenan S."/>
            <person name="Kelly S."/>
            <person name="Kershaw J.K."/>
            <person name="Khan Z."/>
            <person name="Kioschis P."/>
            <person name="Klages S."/>
            <person name="Knights A.J."/>
            <person name="Kosiura A."/>
            <person name="Kovar-Smith C."/>
            <person name="Laird G.K."/>
            <person name="Langford C."/>
            <person name="Lawlor S."/>
            <person name="Leversha M."/>
            <person name="Lewis L."/>
            <person name="Liu W."/>
            <person name="Lloyd C."/>
            <person name="Lloyd D.M."/>
            <person name="Loulseged H."/>
            <person name="Loveland J.E."/>
            <person name="Lovell J.D."/>
            <person name="Lozado R."/>
            <person name="Lu J."/>
            <person name="Lyne R."/>
            <person name="Ma J."/>
            <person name="Maheshwari M."/>
            <person name="Matthews L.H."/>
            <person name="McDowall J."/>
            <person name="McLaren S."/>
            <person name="McMurray A."/>
            <person name="Meidl P."/>
            <person name="Meitinger T."/>
            <person name="Milne S."/>
            <person name="Miner G."/>
            <person name="Mistry S.L."/>
            <person name="Morgan M."/>
            <person name="Morris S."/>
            <person name="Mueller I."/>
            <person name="Mullikin J.C."/>
            <person name="Nguyen N."/>
            <person name="Nordsiek G."/>
            <person name="Nyakatura G."/>
            <person name="O'dell C.N."/>
            <person name="Okwuonu G."/>
            <person name="Palmer S."/>
            <person name="Pandian R."/>
            <person name="Parker D."/>
            <person name="Parrish J."/>
            <person name="Pasternak S."/>
            <person name="Patel D."/>
            <person name="Pearce A.V."/>
            <person name="Pearson D.M."/>
            <person name="Pelan S.E."/>
            <person name="Perez L."/>
            <person name="Porter K.M."/>
            <person name="Ramsey Y."/>
            <person name="Reichwald K."/>
            <person name="Rhodes S."/>
            <person name="Ridler K.A."/>
            <person name="Schlessinger D."/>
            <person name="Schueler M.G."/>
            <person name="Sehra H.K."/>
            <person name="Shaw-Smith C."/>
            <person name="Shen H."/>
            <person name="Sheridan E.M."/>
            <person name="Shownkeen R."/>
            <person name="Skuce C.D."/>
            <person name="Smith M.L."/>
            <person name="Sotheran E.C."/>
            <person name="Steingruber H.E."/>
            <person name="Steward C.A."/>
            <person name="Storey R."/>
            <person name="Swann R.M."/>
            <person name="Swarbreck D."/>
            <person name="Tabor P.E."/>
            <person name="Taudien S."/>
            <person name="Taylor T."/>
            <person name="Teague B."/>
            <person name="Thomas K."/>
            <person name="Thorpe A."/>
            <person name="Timms K."/>
            <person name="Tracey A."/>
            <person name="Trevanion S."/>
            <person name="Tromans A.C."/>
            <person name="d'Urso M."/>
            <person name="Verduzco D."/>
            <person name="Villasana D."/>
            <person name="Waldron L."/>
            <person name="Wall M."/>
            <person name="Wang Q."/>
            <person name="Warren J."/>
            <person name="Warry G.L."/>
            <person name="Wei X."/>
            <person name="West A."/>
            <person name="Whitehead S.L."/>
            <person name="Whiteley M.N."/>
            <person name="Wilkinson J.E."/>
            <person name="Willey D.L."/>
            <person name="Williams G."/>
            <person name="Williams L."/>
            <person name="Williamson A."/>
            <person name="Williamson H."/>
            <person name="Wilming L."/>
            <person name="Woodmansey R.L."/>
            <person name="Wray P.W."/>
            <person name="Yen J."/>
            <person name="Zhang J."/>
            <person name="Zhou J."/>
            <person name="Zoghbi H."/>
            <person name="Zorilla S."/>
            <person name="Buck D."/>
            <person name="Reinhardt R."/>
            <person name="Poustka A."/>
            <person name="Rosenthal A."/>
            <person name="Lehrach H."/>
            <person name="Meindl A."/>
            <person name="Minx P.J."/>
            <person name="Hillier L.W."/>
            <person name="Willard H.F."/>
            <person name="Wilson R.K."/>
            <person name="Waterston R.H."/>
            <person name="Rice C.M."/>
            <person name="Vaudin M."/>
            <person name="Coulson A."/>
            <person name="Nelson D.L."/>
            <person name="Weinstock G."/>
            <person name="Sulston J.E."/>
            <person name="Durbin R.M."/>
            <person name="Hubbard T."/>
            <person name="Gibbs R.A."/>
            <person name="Beck S."/>
            <person name="Rogers J."/>
            <person name="Bentley D.R."/>
        </authorList>
    </citation>
    <scope>NUCLEOTIDE SEQUENCE [LARGE SCALE GENOMIC DNA]</scope>
</reference>
<reference key="4">
    <citation type="submission" date="2005-07" db="EMBL/GenBank/DDBJ databases">
        <authorList>
            <person name="Mural R.J."/>
            <person name="Istrail S."/>
            <person name="Sutton G.G."/>
            <person name="Florea L."/>
            <person name="Halpern A.L."/>
            <person name="Mobarry C.M."/>
            <person name="Lippert R."/>
            <person name="Walenz B."/>
            <person name="Shatkay H."/>
            <person name="Dew I."/>
            <person name="Miller J.R."/>
            <person name="Flanigan M.J."/>
            <person name="Edwards N.J."/>
            <person name="Bolanos R."/>
            <person name="Fasulo D."/>
            <person name="Halldorsson B.V."/>
            <person name="Hannenhalli S."/>
            <person name="Turner R."/>
            <person name="Yooseph S."/>
            <person name="Lu F."/>
            <person name="Nusskern D.R."/>
            <person name="Shue B.C."/>
            <person name="Zheng X.H."/>
            <person name="Zhong F."/>
            <person name="Delcher A.L."/>
            <person name="Huson D.H."/>
            <person name="Kravitz S.A."/>
            <person name="Mouchard L."/>
            <person name="Reinert K."/>
            <person name="Remington K.A."/>
            <person name="Clark A.G."/>
            <person name="Waterman M.S."/>
            <person name="Eichler E.E."/>
            <person name="Adams M.D."/>
            <person name="Hunkapiller M.W."/>
            <person name="Myers E.W."/>
            <person name="Venter J.C."/>
        </authorList>
    </citation>
    <scope>NUCLEOTIDE SEQUENCE [LARGE SCALE GENOMIC DNA]</scope>
</reference>
<reference key="5">
    <citation type="journal article" date="2004" name="Genome Res.">
        <title>The status, quality, and expansion of the NIH full-length cDNA project: the Mammalian Gene Collection (MGC).</title>
        <authorList>
            <consortium name="The MGC Project Team"/>
        </authorList>
    </citation>
    <scope>NUCLEOTIDE SEQUENCE [LARGE SCALE MRNA]</scope>
</reference>
<reference key="6">
    <citation type="journal article" date="2005" name="Mol. Cell. Biol.">
        <title>Enhanceosome formation over the beta interferon promoter underlies a remote-control mechanism mediated by YY1 and YY2.</title>
        <authorList>
            <person name="Klar M."/>
            <person name="Bode J."/>
        </authorList>
    </citation>
    <scope>FUNCTION</scope>
</reference>
<reference key="7">
    <citation type="journal article" date="2006" name="Genomics">
        <title>Rapid evolution of a recently retroposed transcription factor YY2 in mammalian genomes.</title>
        <authorList>
            <person name="Luo C."/>
            <person name="Lu X."/>
            <person name="Stubbs L."/>
            <person name="Kim J."/>
        </authorList>
    </citation>
    <scope>IDENTIFICATION</scope>
</reference>
<reference key="8">
    <citation type="journal article" date="2006" name="Science">
        <title>The consensus coding sequences of human breast and colorectal cancers.</title>
        <authorList>
            <person name="Sjoeblom T."/>
            <person name="Jones S."/>
            <person name="Wood L.D."/>
            <person name="Parsons D.W."/>
            <person name="Lin J."/>
            <person name="Barber T.D."/>
            <person name="Mandelker D."/>
            <person name="Leary R.J."/>
            <person name="Ptak J."/>
            <person name="Silliman N."/>
            <person name="Szabo S."/>
            <person name="Buckhaults P."/>
            <person name="Farrell C."/>
            <person name="Meeh P."/>
            <person name="Markowitz S.D."/>
            <person name="Willis J."/>
            <person name="Dawson D."/>
            <person name="Willson J.K.V."/>
            <person name="Gazdar A.F."/>
            <person name="Hartigan J."/>
            <person name="Wu L."/>
            <person name="Liu C."/>
            <person name="Parmigiani G."/>
            <person name="Park B.H."/>
            <person name="Bachman K.E."/>
            <person name="Papadopoulos N."/>
            <person name="Vogelstein B."/>
            <person name="Kinzler K.W."/>
            <person name="Velculescu V.E."/>
        </authorList>
    </citation>
    <scope>VARIANT [LARGE SCALE ANALYSIS] ASN-103</scope>
</reference>
<evidence type="ECO:0000255" key="1">
    <source>
        <dbReference type="PROSITE-ProRule" id="PRU00042"/>
    </source>
</evidence>
<evidence type="ECO:0000256" key="2">
    <source>
        <dbReference type="SAM" id="MobiDB-lite"/>
    </source>
</evidence>
<evidence type="ECO:0000269" key="3">
    <source>
    </source>
</evidence>
<evidence type="ECO:0000269" key="4">
    <source>
    </source>
</evidence>
<evidence type="ECO:0000269" key="5">
    <source>
    </source>
</evidence>
<evidence type="ECO:0000305" key="6"/>
<sequence length="372" mass="41347">MASNEDFSITQDLEIPADIVELHDINVEPLPMEDIPTESVQYEDVDGNWIYGGHNHPPLMVLQPLFTNTGYGDHDQEMLMLQTQEEVVGYCDSDNQLGNDLEDQLALPDSIEDEHFQMTLASLSASAASTSTSTQSRSKKPSKKPSGKSATSTEANPAGSSSSLGTRKWEQKQMQVKTLEGEFSVTMWSPNDNNDQGAVGEGQAENPPDYSEYLKGKKLPPGGLPGIDLSDPKQLAEFTKVKPKRSKGEPPKTVPCSYSGCEKMFRDYAAMRKHLHIHGPRVHVCAECGKAFLESSKLRRHQLVHTGEKPFQCTFEGCGKRFSLDFNLRTHLRIHTGDKPFVCPFDVCNRKFAQSTNLKTHILTHVKTKNNP</sequence>
<gene>
    <name type="primary">YY2</name>
    <name type="synonym">ZNF631</name>
</gene>
<name>TYY2_HUMAN</name>
<dbReference type="EMBL" id="AY567472">
    <property type="protein sequence ID" value="AAS68634.1"/>
    <property type="molecule type" value="mRNA"/>
</dbReference>
<dbReference type="EMBL" id="AK091850">
    <property type="protein sequence ID" value="BAG52427.1"/>
    <property type="molecule type" value="mRNA"/>
</dbReference>
<dbReference type="EMBL" id="U73479">
    <property type="protein sequence ID" value="AAD08633.1"/>
    <property type="molecule type" value="Genomic_DNA"/>
</dbReference>
<dbReference type="EMBL" id="CH471074">
    <property type="protein sequence ID" value="EAW98983.1"/>
    <property type="molecule type" value="Genomic_DNA"/>
</dbReference>
<dbReference type="EMBL" id="BC137215">
    <property type="protein sequence ID" value="AAI37216.1"/>
    <property type="molecule type" value="mRNA"/>
</dbReference>
<dbReference type="EMBL" id="BC137217">
    <property type="protein sequence ID" value="AAI37218.1"/>
    <property type="molecule type" value="mRNA"/>
</dbReference>
<dbReference type="CCDS" id="CCDS14202.1"/>
<dbReference type="RefSeq" id="NP_996806.2">
    <property type="nucleotide sequence ID" value="NM_206923.4"/>
</dbReference>
<dbReference type="SMR" id="O15391"/>
<dbReference type="BioGRID" id="135656">
    <property type="interactions" value="13"/>
</dbReference>
<dbReference type="FunCoup" id="O15391">
    <property type="interactions" value="44"/>
</dbReference>
<dbReference type="IntAct" id="O15391">
    <property type="interactions" value="8"/>
</dbReference>
<dbReference type="MINT" id="O15391"/>
<dbReference type="STRING" id="9606.ENSP00000389381"/>
<dbReference type="iPTMnet" id="O15391"/>
<dbReference type="PhosphoSitePlus" id="O15391"/>
<dbReference type="BioMuta" id="YY2"/>
<dbReference type="jPOST" id="O15391"/>
<dbReference type="MassIVE" id="O15391"/>
<dbReference type="PaxDb" id="9606-ENSP00000389381"/>
<dbReference type="PeptideAtlas" id="O15391"/>
<dbReference type="ProteomicsDB" id="48626"/>
<dbReference type="Pumba" id="O15391"/>
<dbReference type="Antibodypedia" id="58542">
    <property type="antibodies" value="80 antibodies from 16 providers"/>
</dbReference>
<dbReference type="DNASU" id="404281"/>
<dbReference type="Ensembl" id="ENST00000429584.3">
    <property type="protein sequence ID" value="ENSP00000389381.2"/>
    <property type="gene ID" value="ENSG00000230797.3"/>
</dbReference>
<dbReference type="GeneID" id="404281"/>
<dbReference type="KEGG" id="hsa:404281"/>
<dbReference type="MANE-Select" id="ENST00000429584.3">
    <property type="protein sequence ID" value="ENSP00000389381.2"/>
    <property type="RefSeq nucleotide sequence ID" value="NM_206923.4"/>
    <property type="RefSeq protein sequence ID" value="NP_996806.2"/>
</dbReference>
<dbReference type="UCSC" id="uc011mjp.2">
    <property type="organism name" value="human"/>
</dbReference>
<dbReference type="AGR" id="HGNC:31684"/>
<dbReference type="CTD" id="404281"/>
<dbReference type="DisGeNET" id="404281"/>
<dbReference type="GeneCards" id="YY2"/>
<dbReference type="HGNC" id="HGNC:31684">
    <property type="gene designation" value="YY2"/>
</dbReference>
<dbReference type="HPA" id="ENSG00000230797">
    <property type="expression patterns" value="Tissue enhanced (testis)"/>
</dbReference>
<dbReference type="MIM" id="300570">
    <property type="type" value="gene"/>
</dbReference>
<dbReference type="neXtProt" id="NX_O15391"/>
<dbReference type="OpenTargets" id="ENSG00000230797"/>
<dbReference type="PharmGKB" id="PA134976542"/>
<dbReference type="VEuPathDB" id="HostDB:ENSG00000230797"/>
<dbReference type="eggNOG" id="KOG1721">
    <property type="taxonomic scope" value="Eukaryota"/>
</dbReference>
<dbReference type="GeneTree" id="ENSGT00940000167584"/>
<dbReference type="HOGENOM" id="CLU_002678_42_2_1"/>
<dbReference type="InParanoid" id="O15391"/>
<dbReference type="OMA" id="MLTHAKN"/>
<dbReference type="OrthoDB" id="10264072at2759"/>
<dbReference type="PAN-GO" id="O15391">
    <property type="GO annotations" value="5 GO annotations based on evolutionary models"/>
</dbReference>
<dbReference type="PhylomeDB" id="O15391"/>
<dbReference type="TreeFam" id="TF106493"/>
<dbReference type="PathwayCommons" id="O15391"/>
<dbReference type="SignaLink" id="O15391"/>
<dbReference type="SIGNOR" id="O15391"/>
<dbReference type="BioGRID-ORCS" id="404281">
    <property type="hits" value="12 hits in 800 CRISPR screens"/>
</dbReference>
<dbReference type="GenomeRNAi" id="404281"/>
<dbReference type="Pharos" id="O15391">
    <property type="development level" value="Tbio"/>
</dbReference>
<dbReference type="PRO" id="PR:O15391"/>
<dbReference type="Proteomes" id="UP000005640">
    <property type="component" value="Chromosome X"/>
</dbReference>
<dbReference type="RNAct" id="O15391">
    <property type="molecule type" value="protein"/>
</dbReference>
<dbReference type="Bgee" id="ENSG00000230797">
    <property type="expression patterns" value="Expressed in male germ line stem cell (sensu Vertebrata) in testis and 98 other cell types or tissues"/>
</dbReference>
<dbReference type="GO" id="GO:0000785">
    <property type="term" value="C:chromatin"/>
    <property type="evidence" value="ECO:0000318"/>
    <property type="project" value="GO_Central"/>
</dbReference>
<dbReference type="GO" id="GO:0005634">
    <property type="term" value="C:nucleus"/>
    <property type="evidence" value="ECO:0000314"/>
    <property type="project" value="UniProtKB"/>
</dbReference>
<dbReference type="GO" id="GO:0031519">
    <property type="term" value="C:PcG protein complex"/>
    <property type="evidence" value="ECO:0000318"/>
    <property type="project" value="GO_Central"/>
</dbReference>
<dbReference type="GO" id="GO:0005667">
    <property type="term" value="C:transcription regulator complex"/>
    <property type="evidence" value="ECO:0000318"/>
    <property type="project" value="GO_Central"/>
</dbReference>
<dbReference type="GO" id="GO:0000987">
    <property type="term" value="F:cis-regulatory region sequence-specific DNA binding"/>
    <property type="evidence" value="ECO:0000314"/>
    <property type="project" value="UniProtKB"/>
</dbReference>
<dbReference type="GO" id="GO:0001228">
    <property type="term" value="F:DNA-binding transcription activator activity, RNA polymerase II-specific"/>
    <property type="evidence" value="ECO:0000314"/>
    <property type="project" value="NTNU_SB"/>
</dbReference>
<dbReference type="GO" id="GO:0000981">
    <property type="term" value="F:DNA-binding transcription factor activity, RNA polymerase II-specific"/>
    <property type="evidence" value="ECO:0000318"/>
    <property type="project" value="GO_Central"/>
</dbReference>
<dbReference type="GO" id="GO:0000978">
    <property type="term" value="F:RNA polymerase II cis-regulatory region sequence-specific DNA binding"/>
    <property type="evidence" value="ECO:0000318"/>
    <property type="project" value="GO_Central"/>
</dbReference>
<dbReference type="GO" id="GO:0043565">
    <property type="term" value="F:sequence-specific DNA binding"/>
    <property type="evidence" value="ECO:0000314"/>
    <property type="project" value="NTNU_SB"/>
</dbReference>
<dbReference type="GO" id="GO:1990837">
    <property type="term" value="F:sequence-specific double-stranded DNA binding"/>
    <property type="evidence" value="ECO:0000314"/>
    <property type="project" value="ARUK-UCL"/>
</dbReference>
<dbReference type="GO" id="GO:0008270">
    <property type="term" value="F:zinc ion binding"/>
    <property type="evidence" value="ECO:0007669"/>
    <property type="project" value="UniProtKB-KW"/>
</dbReference>
<dbReference type="GO" id="GO:0045944">
    <property type="term" value="P:positive regulation of transcription by RNA polymerase II"/>
    <property type="evidence" value="ECO:0000314"/>
    <property type="project" value="NTNU_SB"/>
</dbReference>
<dbReference type="GO" id="GO:0006357">
    <property type="term" value="P:regulation of transcription by RNA polymerase II"/>
    <property type="evidence" value="ECO:0000314"/>
    <property type="project" value="UniProtKB"/>
</dbReference>
<dbReference type="FunFam" id="3.30.160.60:FF:000104">
    <property type="entry name" value="Transcriptional repressor protein YY1"/>
    <property type="match status" value="1"/>
</dbReference>
<dbReference type="FunFam" id="3.30.160.60:FF:000109">
    <property type="entry name" value="Transcriptional repressor protein YY1"/>
    <property type="match status" value="1"/>
</dbReference>
<dbReference type="FunFam" id="3.30.160.60:FF:000163">
    <property type="entry name" value="transcriptional repressor protein YY1"/>
    <property type="match status" value="1"/>
</dbReference>
<dbReference type="FunFam" id="3.30.160.60:FF:002038">
    <property type="entry name" value="ZFP42 zinc finger protein"/>
    <property type="match status" value="1"/>
</dbReference>
<dbReference type="Gene3D" id="3.30.160.60">
    <property type="entry name" value="Classic Zinc Finger"/>
    <property type="match status" value="4"/>
</dbReference>
<dbReference type="InterPro" id="IPR017114">
    <property type="entry name" value="YY1-like"/>
</dbReference>
<dbReference type="InterPro" id="IPR036236">
    <property type="entry name" value="Znf_C2H2_sf"/>
</dbReference>
<dbReference type="InterPro" id="IPR013087">
    <property type="entry name" value="Znf_C2H2_type"/>
</dbReference>
<dbReference type="PANTHER" id="PTHR14003:SF17">
    <property type="entry name" value="TRANSCRIPTION FACTOR YY2"/>
    <property type="match status" value="1"/>
</dbReference>
<dbReference type="PANTHER" id="PTHR14003">
    <property type="entry name" value="TRANSCRIPTIONAL REPRESSOR PROTEIN YY"/>
    <property type="match status" value="1"/>
</dbReference>
<dbReference type="Pfam" id="PF00096">
    <property type="entry name" value="zf-C2H2"/>
    <property type="match status" value="3"/>
</dbReference>
<dbReference type="PIRSF" id="PIRSF037113">
    <property type="entry name" value="TF_Yin_yang"/>
    <property type="match status" value="1"/>
</dbReference>
<dbReference type="SMART" id="SM00355">
    <property type="entry name" value="ZnF_C2H2"/>
    <property type="match status" value="4"/>
</dbReference>
<dbReference type="SUPFAM" id="SSF57667">
    <property type="entry name" value="beta-beta-alpha zinc fingers"/>
    <property type="match status" value="3"/>
</dbReference>
<dbReference type="PROSITE" id="PS00028">
    <property type="entry name" value="ZINC_FINGER_C2H2_1"/>
    <property type="match status" value="4"/>
</dbReference>
<dbReference type="PROSITE" id="PS50157">
    <property type="entry name" value="ZINC_FINGER_C2H2_2"/>
    <property type="match status" value="3"/>
</dbReference>
<protein>
    <recommendedName>
        <fullName>Transcription factor YY2</fullName>
    </recommendedName>
    <alternativeName>
        <fullName>Yin and yang 2</fullName>
        <shortName>YY-2</shortName>
    </alternativeName>
    <alternativeName>
        <fullName>Zinc finger protein 631</fullName>
    </alternativeName>
</protein>
<feature type="chain" id="PRO_0000323760" description="Transcription factor YY2">
    <location>
        <begin position="1"/>
        <end position="372"/>
    </location>
</feature>
<feature type="zinc finger region" description="C2H2-type 1" evidence="1">
    <location>
        <begin position="254"/>
        <end position="278"/>
    </location>
</feature>
<feature type="zinc finger region" description="C2H2-type 2" evidence="1">
    <location>
        <begin position="283"/>
        <end position="305"/>
    </location>
</feature>
<feature type="zinc finger region" description="C2H2-type 3" evidence="1">
    <location>
        <begin position="311"/>
        <end position="335"/>
    </location>
</feature>
<feature type="zinc finger region" description="C2H2-type 4" evidence="1">
    <location>
        <begin position="341"/>
        <end position="365"/>
    </location>
</feature>
<feature type="region of interest" description="Mediates transcriptional activation">
    <location>
        <begin position="32"/>
        <end position="102"/>
    </location>
</feature>
<feature type="region of interest" description="Disordered" evidence="2">
    <location>
        <begin position="126"/>
        <end position="172"/>
    </location>
</feature>
<feature type="region of interest" description="Disordered" evidence="2">
    <location>
        <begin position="186"/>
        <end position="210"/>
    </location>
</feature>
<feature type="region of interest" description="Mediates transcriptional repression">
    <location>
        <begin position="237"/>
        <end position="372"/>
    </location>
</feature>
<feature type="compositionally biased region" description="Low complexity" evidence="2">
    <location>
        <begin position="126"/>
        <end position="136"/>
    </location>
</feature>
<feature type="compositionally biased region" description="Basic residues" evidence="2">
    <location>
        <begin position="137"/>
        <end position="146"/>
    </location>
</feature>
<feature type="compositionally biased region" description="Polar residues" evidence="2">
    <location>
        <begin position="154"/>
        <end position="165"/>
    </location>
</feature>
<feature type="compositionally biased region" description="Polar residues" evidence="2">
    <location>
        <begin position="186"/>
        <end position="196"/>
    </location>
</feature>
<feature type="sequence variant" id="VAR_039586" description="In a breast cancer sample; somatic mutation; dbSNP:rs147081325." evidence="5">
    <original>D</original>
    <variation>N</variation>
    <location>
        <position position="103"/>
    </location>
</feature>
<feature type="sequence conflict" description="In Ref. 1; AAS68634." evidence="6" ref="1">
    <original>I</original>
    <variation>T</variation>
    <location>
        <position position="9"/>
    </location>
</feature>
<feature type="sequence conflict" description="In Ref. 1; AAS68634." evidence="6" ref="1">
    <original>K</original>
    <variation>R</variation>
    <location>
        <position position="144"/>
    </location>
</feature>
<organism>
    <name type="scientific">Homo sapiens</name>
    <name type="common">Human</name>
    <dbReference type="NCBI Taxonomy" id="9606"/>
    <lineage>
        <taxon>Eukaryota</taxon>
        <taxon>Metazoa</taxon>
        <taxon>Chordata</taxon>
        <taxon>Craniata</taxon>
        <taxon>Vertebrata</taxon>
        <taxon>Euteleostomi</taxon>
        <taxon>Mammalia</taxon>
        <taxon>Eutheria</taxon>
        <taxon>Euarchontoglires</taxon>
        <taxon>Primates</taxon>
        <taxon>Haplorrhini</taxon>
        <taxon>Catarrhini</taxon>
        <taxon>Hominidae</taxon>
        <taxon>Homo</taxon>
    </lineage>
</organism>
<accession>O15391</accession>
<accession>B2RP10</accession>
<accession>Q6Q1S4</accession>